<comment type="function">
    <text evidence="1">One of the primary rRNA binding proteins, it binds directly to 16S rRNA central domain where it helps coordinate assembly of the platform of the 30S subunit.</text>
</comment>
<comment type="subunit">
    <text evidence="1">Part of the 30S ribosomal subunit. Contacts proteins S5 and S12.</text>
</comment>
<comment type="similarity">
    <text evidence="1">Belongs to the universal ribosomal protein uS8 family.</text>
</comment>
<organism>
    <name type="scientific">Rhodopseudomonas palustris (strain BisB5)</name>
    <dbReference type="NCBI Taxonomy" id="316057"/>
    <lineage>
        <taxon>Bacteria</taxon>
        <taxon>Pseudomonadati</taxon>
        <taxon>Pseudomonadota</taxon>
        <taxon>Alphaproteobacteria</taxon>
        <taxon>Hyphomicrobiales</taxon>
        <taxon>Nitrobacteraceae</taxon>
        <taxon>Rhodopseudomonas</taxon>
    </lineage>
</organism>
<gene>
    <name evidence="1" type="primary">rpsH</name>
    <name type="ordered locus">RPD_3170</name>
</gene>
<proteinExistence type="inferred from homology"/>
<keyword id="KW-0687">Ribonucleoprotein</keyword>
<keyword id="KW-0689">Ribosomal protein</keyword>
<keyword id="KW-0694">RNA-binding</keyword>
<keyword id="KW-0699">rRNA-binding</keyword>
<feature type="chain" id="PRO_0000290917" description="Small ribosomal subunit protein uS8">
    <location>
        <begin position="1"/>
        <end position="132"/>
    </location>
</feature>
<evidence type="ECO:0000255" key="1">
    <source>
        <dbReference type="HAMAP-Rule" id="MF_01302"/>
    </source>
</evidence>
<evidence type="ECO:0000305" key="2"/>
<dbReference type="EMBL" id="CP000283">
    <property type="protein sequence ID" value="ABE40396.1"/>
    <property type="molecule type" value="Genomic_DNA"/>
</dbReference>
<dbReference type="SMR" id="Q134U3"/>
<dbReference type="STRING" id="316057.RPD_3170"/>
<dbReference type="KEGG" id="rpd:RPD_3170"/>
<dbReference type="eggNOG" id="COG0096">
    <property type="taxonomic scope" value="Bacteria"/>
</dbReference>
<dbReference type="HOGENOM" id="CLU_098428_0_0_5"/>
<dbReference type="BioCyc" id="RPAL316057:RPD_RS15915-MONOMER"/>
<dbReference type="Proteomes" id="UP000001818">
    <property type="component" value="Chromosome"/>
</dbReference>
<dbReference type="GO" id="GO:1990904">
    <property type="term" value="C:ribonucleoprotein complex"/>
    <property type="evidence" value="ECO:0007669"/>
    <property type="project" value="UniProtKB-KW"/>
</dbReference>
<dbReference type="GO" id="GO:0005840">
    <property type="term" value="C:ribosome"/>
    <property type="evidence" value="ECO:0007669"/>
    <property type="project" value="UniProtKB-KW"/>
</dbReference>
<dbReference type="GO" id="GO:0019843">
    <property type="term" value="F:rRNA binding"/>
    <property type="evidence" value="ECO:0007669"/>
    <property type="project" value="UniProtKB-UniRule"/>
</dbReference>
<dbReference type="GO" id="GO:0003735">
    <property type="term" value="F:structural constituent of ribosome"/>
    <property type="evidence" value="ECO:0007669"/>
    <property type="project" value="InterPro"/>
</dbReference>
<dbReference type="GO" id="GO:0006412">
    <property type="term" value="P:translation"/>
    <property type="evidence" value="ECO:0007669"/>
    <property type="project" value="UniProtKB-UniRule"/>
</dbReference>
<dbReference type="FunFam" id="3.30.1370.30:FF:000002">
    <property type="entry name" value="30S ribosomal protein S8"/>
    <property type="match status" value="1"/>
</dbReference>
<dbReference type="FunFam" id="3.30.1490.10:FF:000001">
    <property type="entry name" value="30S ribosomal protein S8"/>
    <property type="match status" value="1"/>
</dbReference>
<dbReference type="Gene3D" id="3.30.1370.30">
    <property type="match status" value="1"/>
</dbReference>
<dbReference type="Gene3D" id="3.30.1490.10">
    <property type="match status" value="1"/>
</dbReference>
<dbReference type="HAMAP" id="MF_01302_B">
    <property type="entry name" value="Ribosomal_uS8_B"/>
    <property type="match status" value="1"/>
</dbReference>
<dbReference type="InterPro" id="IPR000630">
    <property type="entry name" value="Ribosomal_uS8"/>
</dbReference>
<dbReference type="InterPro" id="IPR047863">
    <property type="entry name" value="Ribosomal_uS8_CS"/>
</dbReference>
<dbReference type="InterPro" id="IPR035987">
    <property type="entry name" value="Ribosomal_uS8_sf"/>
</dbReference>
<dbReference type="NCBIfam" id="NF001109">
    <property type="entry name" value="PRK00136.1"/>
    <property type="match status" value="1"/>
</dbReference>
<dbReference type="PANTHER" id="PTHR11758">
    <property type="entry name" value="40S RIBOSOMAL PROTEIN S15A"/>
    <property type="match status" value="1"/>
</dbReference>
<dbReference type="Pfam" id="PF00410">
    <property type="entry name" value="Ribosomal_S8"/>
    <property type="match status" value="1"/>
</dbReference>
<dbReference type="SUPFAM" id="SSF56047">
    <property type="entry name" value="Ribosomal protein S8"/>
    <property type="match status" value="1"/>
</dbReference>
<dbReference type="PROSITE" id="PS00053">
    <property type="entry name" value="RIBOSOMAL_S8"/>
    <property type="match status" value="1"/>
</dbReference>
<name>RS8_RHOPS</name>
<sequence>MSTHDPISDLITRIRNAQMRSKSKVSTPGSRMRASVLEVLKSEGYIRGYASVEHPSGRSELEIELKYFDGEPVIREIERVSRPGRRVYASVKNLPRVNNGLGISVLSTPKGIMADHDARDANVGGEVLFTVF</sequence>
<reference key="1">
    <citation type="submission" date="2006-03" db="EMBL/GenBank/DDBJ databases">
        <title>Complete sequence of Rhodopseudomonas palustris BisB5.</title>
        <authorList>
            <consortium name="US DOE Joint Genome Institute"/>
            <person name="Copeland A."/>
            <person name="Lucas S."/>
            <person name="Lapidus A."/>
            <person name="Barry K."/>
            <person name="Detter J.C."/>
            <person name="Glavina del Rio T."/>
            <person name="Hammon N."/>
            <person name="Israni S."/>
            <person name="Dalin E."/>
            <person name="Tice H."/>
            <person name="Pitluck S."/>
            <person name="Chain P."/>
            <person name="Malfatti S."/>
            <person name="Shin M."/>
            <person name="Vergez L."/>
            <person name="Schmutz J."/>
            <person name="Larimer F."/>
            <person name="Land M."/>
            <person name="Hauser L."/>
            <person name="Pelletier D.A."/>
            <person name="Kyrpides N."/>
            <person name="Lykidis A."/>
            <person name="Oda Y."/>
            <person name="Harwood C.S."/>
            <person name="Richardson P."/>
        </authorList>
    </citation>
    <scope>NUCLEOTIDE SEQUENCE [LARGE SCALE GENOMIC DNA]</scope>
    <source>
        <strain>BisB5</strain>
    </source>
</reference>
<protein>
    <recommendedName>
        <fullName evidence="1">Small ribosomal subunit protein uS8</fullName>
    </recommendedName>
    <alternativeName>
        <fullName evidence="2">30S ribosomal protein S8</fullName>
    </alternativeName>
</protein>
<accession>Q134U3</accession>